<protein>
    <recommendedName>
        <fullName evidence="1">Glutamate-1-semialdehyde 2,1-aminomutase</fullName>
        <shortName evidence="1">GSA</shortName>
        <ecNumber evidence="1">5.4.3.8</ecNumber>
    </recommendedName>
    <alternativeName>
        <fullName evidence="1">Glutamate-1-semialdehyde aminotransferase</fullName>
        <shortName evidence="1">GSA-AT</shortName>
    </alternativeName>
</protein>
<reference key="1">
    <citation type="submission" date="2009-01" db="EMBL/GenBank/DDBJ databases">
        <title>Complete sequence of Geobacter sp. FRC-32.</title>
        <authorList>
            <consortium name="US DOE Joint Genome Institute"/>
            <person name="Lucas S."/>
            <person name="Copeland A."/>
            <person name="Lapidus A."/>
            <person name="Glavina del Rio T."/>
            <person name="Dalin E."/>
            <person name="Tice H."/>
            <person name="Bruce D."/>
            <person name="Goodwin L."/>
            <person name="Pitluck S."/>
            <person name="Saunders E."/>
            <person name="Brettin T."/>
            <person name="Detter J.C."/>
            <person name="Han C."/>
            <person name="Larimer F."/>
            <person name="Land M."/>
            <person name="Hauser L."/>
            <person name="Kyrpides N."/>
            <person name="Ovchinnikova G."/>
            <person name="Kostka J."/>
            <person name="Richardson P."/>
        </authorList>
    </citation>
    <scope>NUCLEOTIDE SEQUENCE [LARGE SCALE GENOMIC DNA]</scope>
    <source>
        <strain>DSM 22248 / JCM 15807 / FRC-32</strain>
    </source>
</reference>
<comment type="catalytic activity">
    <reaction evidence="1">
        <text>(S)-4-amino-5-oxopentanoate = 5-aminolevulinate</text>
        <dbReference type="Rhea" id="RHEA:14265"/>
        <dbReference type="ChEBI" id="CHEBI:57501"/>
        <dbReference type="ChEBI" id="CHEBI:356416"/>
        <dbReference type="EC" id="5.4.3.8"/>
    </reaction>
</comment>
<comment type="cofactor">
    <cofactor evidence="1">
        <name>pyridoxal 5'-phosphate</name>
        <dbReference type="ChEBI" id="CHEBI:597326"/>
    </cofactor>
</comment>
<comment type="pathway">
    <text evidence="1">Porphyrin-containing compound metabolism; protoporphyrin-IX biosynthesis; 5-aminolevulinate from L-glutamyl-tRNA(Glu): step 2/2.</text>
</comment>
<comment type="subunit">
    <text evidence="1">Homodimer.</text>
</comment>
<comment type="subcellular location">
    <subcellularLocation>
        <location evidence="1">Cytoplasm</location>
    </subcellularLocation>
</comment>
<comment type="similarity">
    <text evidence="1">Belongs to the class-III pyridoxal-phosphate-dependent aminotransferase family. HemL subfamily.</text>
</comment>
<name>GSA_GEODF</name>
<dbReference type="EC" id="5.4.3.8" evidence="1"/>
<dbReference type="EMBL" id="CP001390">
    <property type="protein sequence ID" value="ACM18830.1"/>
    <property type="molecule type" value="Genomic_DNA"/>
</dbReference>
<dbReference type="RefSeq" id="WP_012645559.1">
    <property type="nucleotide sequence ID" value="NC_011979.1"/>
</dbReference>
<dbReference type="SMR" id="B9LZL6"/>
<dbReference type="STRING" id="316067.Geob_0461"/>
<dbReference type="KEGG" id="geo:Geob_0461"/>
<dbReference type="eggNOG" id="COG0001">
    <property type="taxonomic scope" value="Bacteria"/>
</dbReference>
<dbReference type="HOGENOM" id="CLU_016922_1_5_7"/>
<dbReference type="OrthoDB" id="9801052at2"/>
<dbReference type="UniPathway" id="UPA00251">
    <property type="reaction ID" value="UER00317"/>
</dbReference>
<dbReference type="Proteomes" id="UP000007721">
    <property type="component" value="Chromosome"/>
</dbReference>
<dbReference type="GO" id="GO:0005737">
    <property type="term" value="C:cytoplasm"/>
    <property type="evidence" value="ECO:0007669"/>
    <property type="project" value="UniProtKB-SubCell"/>
</dbReference>
<dbReference type="GO" id="GO:0042286">
    <property type="term" value="F:glutamate-1-semialdehyde 2,1-aminomutase activity"/>
    <property type="evidence" value="ECO:0007669"/>
    <property type="project" value="UniProtKB-UniRule"/>
</dbReference>
<dbReference type="GO" id="GO:0030170">
    <property type="term" value="F:pyridoxal phosphate binding"/>
    <property type="evidence" value="ECO:0007669"/>
    <property type="project" value="InterPro"/>
</dbReference>
<dbReference type="GO" id="GO:0008483">
    <property type="term" value="F:transaminase activity"/>
    <property type="evidence" value="ECO:0007669"/>
    <property type="project" value="InterPro"/>
</dbReference>
<dbReference type="GO" id="GO:0006782">
    <property type="term" value="P:protoporphyrinogen IX biosynthetic process"/>
    <property type="evidence" value="ECO:0007669"/>
    <property type="project" value="UniProtKB-UniRule"/>
</dbReference>
<dbReference type="CDD" id="cd00610">
    <property type="entry name" value="OAT_like"/>
    <property type="match status" value="1"/>
</dbReference>
<dbReference type="FunFam" id="3.40.640.10:FF:000021">
    <property type="entry name" value="Glutamate-1-semialdehyde 2,1-aminomutase"/>
    <property type="match status" value="1"/>
</dbReference>
<dbReference type="Gene3D" id="3.90.1150.10">
    <property type="entry name" value="Aspartate Aminotransferase, domain 1"/>
    <property type="match status" value="1"/>
</dbReference>
<dbReference type="Gene3D" id="3.40.640.10">
    <property type="entry name" value="Type I PLP-dependent aspartate aminotransferase-like (Major domain)"/>
    <property type="match status" value="1"/>
</dbReference>
<dbReference type="HAMAP" id="MF_00375">
    <property type="entry name" value="HemL_aminotrans_3"/>
    <property type="match status" value="1"/>
</dbReference>
<dbReference type="InterPro" id="IPR004639">
    <property type="entry name" value="4pyrrol_synth_GluAld_NH2Trfase"/>
</dbReference>
<dbReference type="InterPro" id="IPR005814">
    <property type="entry name" value="Aminotrans_3"/>
</dbReference>
<dbReference type="InterPro" id="IPR049704">
    <property type="entry name" value="Aminotrans_3_PPA_site"/>
</dbReference>
<dbReference type="InterPro" id="IPR015424">
    <property type="entry name" value="PyrdxlP-dep_Trfase"/>
</dbReference>
<dbReference type="InterPro" id="IPR015421">
    <property type="entry name" value="PyrdxlP-dep_Trfase_major"/>
</dbReference>
<dbReference type="InterPro" id="IPR015422">
    <property type="entry name" value="PyrdxlP-dep_Trfase_small"/>
</dbReference>
<dbReference type="NCBIfam" id="TIGR00713">
    <property type="entry name" value="hemL"/>
    <property type="match status" value="1"/>
</dbReference>
<dbReference type="NCBIfam" id="NF000818">
    <property type="entry name" value="PRK00062.1"/>
    <property type="match status" value="1"/>
</dbReference>
<dbReference type="PANTHER" id="PTHR43713">
    <property type="entry name" value="GLUTAMATE-1-SEMIALDEHYDE 2,1-AMINOMUTASE"/>
    <property type="match status" value="1"/>
</dbReference>
<dbReference type="PANTHER" id="PTHR43713:SF3">
    <property type="entry name" value="GLUTAMATE-1-SEMIALDEHYDE 2,1-AMINOMUTASE 1, CHLOROPLASTIC-RELATED"/>
    <property type="match status" value="1"/>
</dbReference>
<dbReference type="Pfam" id="PF00202">
    <property type="entry name" value="Aminotran_3"/>
    <property type="match status" value="1"/>
</dbReference>
<dbReference type="SUPFAM" id="SSF53383">
    <property type="entry name" value="PLP-dependent transferases"/>
    <property type="match status" value="1"/>
</dbReference>
<dbReference type="PROSITE" id="PS00600">
    <property type="entry name" value="AA_TRANSFER_CLASS_3"/>
    <property type="match status" value="1"/>
</dbReference>
<keyword id="KW-0963">Cytoplasm</keyword>
<keyword id="KW-0413">Isomerase</keyword>
<keyword id="KW-0627">Porphyrin biosynthesis</keyword>
<keyword id="KW-0663">Pyridoxal phosphate</keyword>
<keyword id="KW-1185">Reference proteome</keyword>
<evidence type="ECO:0000255" key="1">
    <source>
        <dbReference type="HAMAP-Rule" id="MF_00375"/>
    </source>
</evidence>
<organism>
    <name type="scientific">Geotalea daltonii (strain DSM 22248 / JCM 15807 / FRC-32)</name>
    <name type="common">Geobacter daltonii</name>
    <dbReference type="NCBI Taxonomy" id="316067"/>
    <lineage>
        <taxon>Bacteria</taxon>
        <taxon>Pseudomonadati</taxon>
        <taxon>Thermodesulfobacteriota</taxon>
        <taxon>Desulfuromonadia</taxon>
        <taxon>Geobacterales</taxon>
        <taxon>Geobacteraceae</taxon>
        <taxon>Geotalea</taxon>
    </lineage>
</organism>
<feature type="chain" id="PRO_1000201021" description="Glutamate-1-semialdehyde 2,1-aminomutase">
    <location>
        <begin position="1"/>
        <end position="427"/>
    </location>
</feature>
<feature type="modified residue" description="N6-(pyridoxal phosphate)lysine" evidence="1">
    <location>
        <position position="267"/>
    </location>
</feature>
<sequence length="427" mass="45280">MNFSRSADLFKQAQNSIPGGVNSPVRAFKSVGRDPLFIKKASGCKIEDVDGNQFIDFVGSWGPMILGHCHPQVASAVKAAVDSGCSFGAPTELEITLAEMVINAVPSIEMVRMVSSGTEATMSAIRLARGYTGRDKILKFSGCYHGHSDSLLVKAGSGAATFGVPDSPGVPQDFARHTLTADYNSLESVRTLIAENKGQVACIIVEPVAGNMGTVPPREGFLEGLRTLCTQEGIVLIFDEVMSGFRVAYGGAQEVYGVTPDMTTLGKIIGGGLPVGAFGGKKEIMTLLSPSGGVYQAGTLSGNPLAMTAGIETLKLLQAEGFYRNLEEKSSYVAAGIARAAEKAGFPIYSARVGSMFCAFFSKDPVYDWTTAAKCDTEAFAKYFRLMLGEGIYLAPSQYETAFVSIAHATEDLDRTIAAAEKSFRAL</sequence>
<gene>
    <name evidence="1" type="primary">hemL</name>
    <name type="ordered locus">Geob_0461</name>
</gene>
<accession>B9LZL6</accession>
<proteinExistence type="inferred from homology"/>